<protein>
    <recommendedName>
        <fullName>Regulator of G-protein signaling 4</fullName>
        <shortName>RGP4</shortName>
        <shortName>RGS4</shortName>
    </recommendedName>
</protein>
<comment type="function">
    <text>Inhibits signal transduction by increasing the GTPase activity of G protein alpha subunits thereby driving them into their inactive GDP-bound form. Activity on G(z)-alpha is inhibited by phosphorylation of the G-protein. Activity on G(z)-alpha and G(i)-alpha-1 is inhibited by palmitoylation of the G-protein.</text>
</comment>
<comment type="alternative products">
    <event type="alternative splicing"/>
    <isoform>
        <id>P49798-1</id>
        <name>1</name>
        <name>B</name>
        <sequence type="displayed"/>
    </isoform>
    <isoform>
        <id>P49798-2</id>
        <name>2</name>
        <name>A</name>
        <sequence type="described" ref="VSP_043856"/>
    </isoform>
    <isoform>
        <id>P49798-3</id>
        <name>3</name>
        <name>C</name>
        <sequence type="described" ref="VSP_043853"/>
    </isoform>
    <isoform>
        <id>P49798-4</id>
        <name>4</name>
        <sequence type="described" ref="VSP_043855"/>
    </isoform>
    <isoform>
        <id>P49798-5</id>
        <name>5</name>
        <sequence type="described" ref="VSP_043854"/>
    </isoform>
    <text>May be produced by alternative promoter usage.</text>
</comment>
<comment type="tissue specificity">
    <text evidence="6">Expressed in brain and heart. Expressed in brain at protein level. Expressed in prefontal and visual cortex. Isoform 4 and isoform 5 are expressed ubiquitously. Isoform 1, isoform 2 and isoform 3 are not expressed in the cerebellum.</text>
</comment>
<comment type="PTM">
    <text evidence="3">Palmitoylated on Cys-2 and/or Cys-12.</text>
</comment>
<comment type="PTM">
    <text evidence="1">Phosphorylated by cyclic GMP-dependent protein kinase.</text>
</comment>
<comment type="disease" evidence="4 5">
    <disease id="DI-03626">
        <name>Schizophrenia</name>
        <acronym>SCZD</acronym>
        <description>A complex, multifactorial psychotic disorder or group of disorders characterized by disturbances in the form and content of thought (e.g. delusions, hallucinations), in mood (e.g. inappropriate affect), in sense of self and relationship to the external world (e.g. loss of ego boundaries, withdrawal), and in behavior (e.g bizarre or apparently purposeless behavior). Although it affects emotions, it is distinguished from mood disorders in which such disturbances are primary. Similarly, there may be mild impairment of cognitive function, and it is distinguished from the dementias in which disturbed cognitive function is considered primary. Some patients manifest schizophrenic as well as bipolar disorder symptoms and are often given the diagnosis of schizoaffective disorder.</description>
        <dbReference type="MIM" id="181500"/>
    </disease>
    <text>Disease susceptibility may be associated with variants affecting the gene represented in this entry.</text>
</comment>
<name>RGS4_HUMAN</name>
<feature type="chain" id="PRO_0000204185" description="Regulator of G-protein signaling 4">
    <location>
        <begin position="1"/>
        <end position="205"/>
    </location>
</feature>
<feature type="domain" description="RGS" evidence="2">
    <location>
        <begin position="62"/>
        <end position="178"/>
    </location>
</feature>
<feature type="lipid moiety-binding region" description="S-palmitoyl cysteine" evidence="10">
    <location>
        <position position="2"/>
    </location>
</feature>
<feature type="lipid moiety-binding region" description="S-palmitoyl cysteine" evidence="10">
    <location>
        <position position="12"/>
    </location>
</feature>
<feature type="lipid moiety-binding region" description="S-palmitoyl cysteine" evidence="3">
    <location>
        <position position="95"/>
    </location>
</feature>
<feature type="splice variant" id="VSP_043854" description="In isoform 5." evidence="7 8">
    <location>
        <begin position="1"/>
        <end position="18"/>
    </location>
</feature>
<feature type="splice variant" id="VSP_043853" description="In isoform 3." evidence="7 8">
    <original>M</original>
    <variation>MYNMMLLIQKRKGIGSQLLRAGEAEGDRGAGTAERSSDWLDGRSWAIKETPTGLAGRRSEDSDNIFTGEEAKYAQSRSHSSSCRISFLLANSKLLNKM</variation>
    <location>
        <position position="1"/>
    </location>
</feature>
<feature type="splice variant" id="VSP_043855" description="In isoform 4." evidence="9">
    <original>GLAAFKAFLKSEYSEENIDFWISCEEYKKIKSPSKLSPKAKKIYNEFISVQATKEVNLDSCTREETSRNMLEPTITCFDEAQKKIFNLMEKDSYRRFLKSRFYLDLVNPSSCGAEKQKGAKSSADCASLVPQCA</original>
    <variation>EPGFLHQGRDKPEHARAYNNLL</variation>
    <location>
        <begin position="72"/>
        <end position="205"/>
    </location>
</feature>
<feature type="splice variant" id="VSP_043856" description="In isoform 2." evidence="8">
    <original>F</original>
    <variation>S</variation>
    <location>
        <position position="173"/>
    </location>
</feature>
<feature type="sequence variant" id="VAR_051795" description="In dbSNP:rs14665.">
    <original>A</original>
    <variation>S</variation>
    <location>
        <position position="195"/>
    </location>
</feature>
<dbReference type="EMBL" id="U27768">
    <property type="protein sequence ID" value="AAC50395.1"/>
    <property type="molecule type" value="mRNA"/>
</dbReference>
<dbReference type="EMBL" id="DQ346662">
    <property type="protein sequence ID" value="ABC94590.1"/>
    <property type="molecule type" value="mRNA"/>
</dbReference>
<dbReference type="EMBL" id="DQ346663">
    <property type="protein sequence ID" value="ABC94591.1"/>
    <property type="molecule type" value="mRNA"/>
</dbReference>
<dbReference type="EMBL" id="DQ346664">
    <property type="protein sequence ID" value="ABC94592.1"/>
    <property type="molecule type" value="mRNA"/>
</dbReference>
<dbReference type="EMBL" id="EF054877">
    <property type="protein sequence ID" value="ABL74968.1"/>
    <property type="molecule type" value="mRNA"/>
</dbReference>
<dbReference type="EMBL" id="AK093959">
    <property type="status" value="NOT_ANNOTATED_CDS"/>
    <property type="molecule type" value="mRNA"/>
</dbReference>
<dbReference type="EMBL" id="AK295540">
    <property type="protein sequence ID" value="BAG58449.1"/>
    <property type="molecule type" value="mRNA"/>
</dbReference>
<dbReference type="EMBL" id="AK296240">
    <property type="protein sequence ID" value="BAG58958.1"/>
    <property type="molecule type" value="mRNA"/>
</dbReference>
<dbReference type="EMBL" id="AK312250">
    <property type="protein sequence ID" value="BAG35182.1"/>
    <property type="molecule type" value="mRNA"/>
</dbReference>
<dbReference type="EMBL" id="AF493928">
    <property type="protein sequence ID" value="AAM12642.1"/>
    <property type="molecule type" value="mRNA"/>
</dbReference>
<dbReference type="EMBL" id="BT007025">
    <property type="protein sequence ID" value="AAP35671.1"/>
    <property type="molecule type" value="mRNA"/>
</dbReference>
<dbReference type="EMBL" id="AL583850">
    <property type="status" value="NOT_ANNOTATED_CDS"/>
    <property type="molecule type" value="Genomic_DNA"/>
</dbReference>
<dbReference type="EMBL" id="CH471067">
    <property type="protein sequence ID" value="EAW90727.1"/>
    <property type="molecule type" value="Genomic_DNA"/>
</dbReference>
<dbReference type="EMBL" id="CH471067">
    <property type="protein sequence ID" value="EAW90728.1"/>
    <property type="molecule type" value="Genomic_DNA"/>
</dbReference>
<dbReference type="EMBL" id="BC000737">
    <property type="protein sequence ID" value="AAH00737.1"/>
    <property type="molecule type" value="mRNA"/>
</dbReference>
<dbReference type="EMBL" id="BC051869">
    <property type="protein sequence ID" value="AAH51869.1"/>
    <property type="molecule type" value="mRNA"/>
</dbReference>
<dbReference type="CCDS" id="CCDS1243.1">
    <molecule id="P49798-1"/>
</dbReference>
<dbReference type="CCDS" id="CCDS44270.1">
    <molecule id="P49798-3"/>
</dbReference>
<dbReference type="CCDS" id="CCDS44271.1">
    <molecule id="P49798-4"/>
</dbReference>
<dbReference type="CCDS" id="CCDS44272.1">
    <molecule id="P49798-5"/>
</dbReference>
<dbReference type="PIR" id="S78221">
    <property type="entry name" value="S78221"/>
</dbReference>
<dbReference type="RefSeq" id="NP_001095915.1">
    <molecule id="P49798-3"/>
    <property type="nucleotide sequence ID" value="NM_001102445.3"/>
</dbReference>
<dbReference type="RefSeq" id="NP_001106851.1">
    <molecule id="P49798-5"/>
    <property type="nucleotide sequence ID" value="NM_001113380.1"/>
</dbReference>
<dbReference type="RefSeq" id="NP_001106852.1">
    <molecule id="P49798-4"/>
    <property type="nucleotide sequence ID" value="NM_001113381.1"/>
</dbReference>
<dbReference type="RefSeq" id="NP_005604.1">
    <molecule id="P49798-1"/>
    <property type="nucleotide sequence ID" value="NM_005613.6"/>
</dbReference>
<dbReference type="BMRB" id="P49798"/>
<dbReference type="SMR" id="P49798"/>
<dbReference type="BioGRID" id="111931">
    <property type="interactions" value="21"/>
</dbReference>
<dbReference type="DIP" id="DIP-59092N"/>
<dbReference type="FunCoup" id="P49798">
    <property type="interactions" value="1143"/>
</dbReference>
<dbReference type="IntAct" id="P49798">
    <property type="interactions" value="7"/>
</dbReference>
<dbReference type="STRING" id="9606.ENSP00000397181"/>
<dbReference type="BindingDB" id="P49798"/>
<dbReference type="ChEMBL" id="CHEMBL1795091"/>
<dbReference type="GuidetoPHARMACOLOGY" id="2811"/>
<dbReference type="GlyGen" id="P49798">
    <property type="glycosylation" value="1 site"/>
</dbReference>
<dbReference type="iPTMnet" id="P49798"/>
<dbReference type="PhosphoSitePlus" id="P49798"/>
<dbReference type="SwissPalm" id="P49798"/>
<dbReference type="BioMuta" id="RGS4"/>
<dbReference type="DMDM" id="1710146"/>
<dbReference type="jPOST" id="P49798"/>
<dbReference type="MassIVE" id="P49798"/>
<dbReference type="PaxDb" id="9606-ENSP00000397181"/>
<dbReference type="PeptideAtlas" id="P49798"/>
<dbReference type="ProteomicsDB" id="56129">
    <molecule id="P49798-1"/>
</dbReference>
<dbReference type="ProteomicsDB" id="56130">
    <molecule id="P49798-2"/>
</dbReference>
<dbReference type="ProteomicsDB" id="56131">
    <molecule id="P49798-3"/>
</dbReference>
<dbReference type="ProteomicsDB" id="56133">
    <molecule id="P49798-5"/>
</dbReference>
<dbReference type="Antibodypedia" id="20521">
    <property type="antibodies" value="277 antibodies from 33 providers"/>
</dbReference>
<dbReference type="DNASU" id="5999"/>
<dbReference type="Ensembl" id="ENST00000367906.7">
    <molecule id="P49798-5"/>
    <property type="protein sequence ID" value="ENSP00000356882.3"/>
    <property type="gene ID" value="ENSG00000117152.14"/>
</dbReference>
<dbReference type="Ensembl" id="ENST00000367908.8">
    <molecule id="P49798-4"/>
    <property type="protein sequence ID" value="ENSP00000356884.4"/>
    <property type="gene ID" value="ENSG00000117152.14"/>
</dbReference>
<dbReference type="Ensembl" id="ENST00000367909.11">
    <molecule id="P49798-1"/>
    <property type="protein sequence ID" value="ENSP00000356885.6"/>
    <property type="gene ID" value="ENSG00000117152.14"/>
</dbReference>
<dbReference type="Ensembl" id="ENST00000421743.6">
    <molecule id="P49798-3"/>
    <property type="protein sequence ID" value="ENSP00000397181.2"/>
    <property type="gene ID" value="ENSG00000117152.14"/>
</dbReference>
<dbReference type="Ensembl" id="ENST00000527809.5">
    <molecule id="P49798-5"/>
    <property type="protein sequence ID" value="ENSP00000433261.1"/>
    <property type="gene ID" value="ENSG00000117152.14"/>
</dbReference>
<dbReference type="GeneID" id="5999"/>
<dbReference type="KEGG" id="hsa:5999"/>
<dbReference type="MANE-Select" id="ENST00000367909.11">
    <property type="protein sequence ID" value="ENSP00000356885.6"/>
    <property type="RefSeq nucleotide sequence ID" value="NM_005613.6"/>
    <property type="RefSeq protein sequence ID" value="NP_005604.1"/>
</dbReference>
<dbReference type="UCSC" id="uc001gcl.5">
    <molecule id="P49798-1"/>
    <property type="organism name" value="human"/>
</dbReference>
<dbReference type="AGR" id="HGNC:10000"/>
<dbReference type="CTD" id="5999"/>
<dbReference type="DisGeNET" id="5999"/>
<dbReference type="GeneCards" id="RGS4"/>
<dbReference type="HGNC" id="HGNC:10000">
    <property type="gene designation" value="RGS4"/>
</dbReference>
<dbReference type="HPA" id="ENSG00000117152">
    <property type="expression patterns" value="Tissue enriched (brain)"/>
</dbReference>
<dbReference type="MIM" id="181500">
    <property type="type" value="phenotype"/>
</dbReference>
<dbReference type="MIM" id="602516">
    <property type="type" value="gene"/>
</dbReference>
<dbReference type="neXtProt" id="NX_P49798"/>
<dbReference type="OpenTargets" id="ENSG00000117152"/>
<dbReference type="PharmGKB" id="PA34375"/>
<dbReference type="VEuPathDB" id="HostDB:ENSG00000117152"/>
<dbReference type="eggNOG" id="KOG3589">
    <property type="taxonomic scope" value="Eukaryota"/>
</dbReference>
<dbReference type="GeneTree" id="ENSGT00940000159036"/>
<dbReference type="HOGENOM" id="CLU_059863_3_0_1"/>
<dbReference type="InParanoid" id="P49798"/>
<dbReference type="OMA" id="LIQDLCQ"/>
<dbReference type="OrthoDB" id="196547at2759"/>
<dbReference type="PAN-GO" id="P49798">
    <property type="GO annotations" value="0 GO annotations based on evolutionary models"/>
</dbReference>
<dbReference type="PhylomeDB" id="P49798"/>
<dbReference type="TreeFam" id="TF315837"/>
<dbReference type="PathwayCommons" id="P49798"/>
<dbReference type="Reactome" id="R-HSA-416476">
    <property type="pathway name" value="G alpha (q) signalling events"/>
</dbReference>
<dbReference type="Reactome" id="R-HSA-418594">
    <property type="pathway name" value="G alpha (i) signalling events"/>
</dbReference>
<dbReference type="Reactome" id="R-HSA-418597">
    <property type="pathway name" value="G alpha (z) signalling events"/>
</dbReference>
<dbReference type="SignaLink" id="P49798"/>
<dbReference type="BioGRID-ORCS" id="5999">
    <property type="hits" value="8 hits in 1149 CRISPR screens"/>
</dbReference>
<dbReference type="ChiTaRS" id="RGS4">
    <property type="organism name" value="human"/>
</dbReference>
<dbReference type="GeneWiki" id="RGS4"/>
<dbReference type="GenomeRNAi" id="5999"/>
<dbReference type="Pharos" id="P49798">
    <property type="development level" value="Tchem"/>
</dbReference>
<dbReference type="PRO" id="PR:P49798"/>
<dbReference type="Proteomes" id="UP000005640">
    <property type="component" value="Chromosome 1"/>
</dbReference>
<dbReference type="RNAct" id="P49798">
    <property type="molecule type" value="protein"/>
</dbReference>
<dbReference type="Bgee" id="ENSG00000117152">
    <property type="expression patterns" value="Expressed in middle temporal gyrus and 166 other cell types or tissues"/>
</dbReference>
<dbReference type="ExpressionAtlas" id="P49798">
    <property type="expression patterns" value="baseline and differential"/>
</dbReference>
<dbReference type="GO" id="GO:0005737">
    <property type="term" value="C:cytoplasm"/>
    <property type="evidence" value="ECO:0000314"/>
    <property type="project" value="CACAO"/>
</dbReference>
<dbReference type="GO" id="GO:0005634">
    <property type="term" value="C:nucleus"/>
    <property type="evidence" value="ECO:0000314"/>
    <property type="project" value="CACAO"/>
</dbReference>
<dbReference type="GO" id="GO:0005886">
    <property type="term" value="C:plasma membrane"/>
    <property type="evidence" value="ECO:0000304"/>
    <property type="project" value="Reactome"/>
</dbReference>
<dbReference type="GO" id="GO:0032991">
    <property type="term" value="C:protein-containing complex"/>
    <property type="evidence" value="ECO:0007669"/>
    <property type="project" value="Ensembl"/>
</dbReference>
<dbReference type="GO" id="GO:0005516">
    <property type="term" value="F:calmodulin binding"/>
    <property type="evidence" value="ECO:0000304"/>
    <property type="project" value="ProtInc"/>
</dbReference>
<dbReference type="GO" id="GO:0001965">
    <property type="term" value="F:G-protein alpha-subunit binding"/>
    <property type="evidence" value="ECO:0007669"/>
    <property type="project" value="Ensembl"/>
</dbReference>
<dbReference type="GO" id="GO:0005096">
    <property type="term" value="F:GTPase activator activity"/>
    <property type="evidence" value="ECO:0000304"/>
    <property type="project" value="ProtInc"/>
</dbReference>
<dbReference type="GO" id="GO:0003924">
    <property type="term" value="F:GTPase activity"/>
    <property type="evidence" value="ECO:0000304"/>
    <property type="project" value="Reactome"/>
</dbReference>
<dbReference type="GO" id="GO:0019901">
    <property type="term" value="F:protein kinase binding"/>
    <property type="evidence" value="ECO:0007669"/>
    <property type="project" value="Ensembl"/>
</dbReference>
<dbReference type="GO" id="GO:1990791">
    <property type="term" value="P:dorsal root ganglion development"/>
    <property type="evidence" value="ECO:0007669"/>
    <property type="project" value="Ensembl"/>
</dbReference>
<dbReference type="GO" id="GO:0007186">
    <property type="term" value="P:G protein-coupled receptor signaling pathway"/>
    <property type="evidence" value="ECO:0000304"/>
    <property type="project" value="Reactome"/>
</dbReference>
<dbReference type="GO" id="GO:0061052">
    <property type="term" value="P:negative regulation of cell growth involved in cardiac muscle cell development"/>
    <property type="evidence" value="ECO:0007669"/>
    <property type="project" value="Ensembl"/>
</dbReference>
<dbReference type="GO" id="GO:0060160">
    <property type="term" value="P:negative regulation of dopamine receptor signaling pathway"/>
    <property type="evidence" value="ECO:0007669"/>
    <property type="project" value="Ensembl"/>
</dbReference>
<dbReference type="GO" id="GO:1900924">
    <property type="term" value="P:negative regulation of glycine import across plasma membrane"/>
    <property type="evidence" value="ECO:0007669"/>
    <property type="project" value="Ensembl"/>
</dbReference>
<dbReference type="GO" id="GO:1901380">
    <property type="term" value="P:negative regulation of potassium ion transmembrane transport"/>
    <property type="evidence" value="ECO:0007669"/>
    <property type="project" value="Ensembl"/>
</dbReference>
<dbReference type="GO" id="GO:2000463">
    <property type="term" value="P:positive regulation of excitatory postsynaptic potential"/>
    <property type="evidence" value="ECO:0007669"/>
    <property type="project" value="Ensembl"/>
</dbReference>
<dbReference type="GO" id="GO:0010460">
    <property type="term" value="P:positive regulation of heart rate"/>
    <property type="evidence" value="ECO:0007669"/>
    <property type="project" value="Ensembl"/>
</dbReference>
<dbReference type="GO" id="GO:0110053">
    <property type="term" value="P:regulation of actin filament organization"/>
    <property type="evidence" value="ECO:0007669"/>
    <property type="project" value="Ensembl"/>
</dbReference>
<dbReference type="GO" id="GO:0051924">
    <property type="term" value="P:regulation of calcium ion transport"/>
    <property type="evidence" value="ECO:0007669"/>
    <property type="project" value="Ensembl"/>
</dbReference>
<dbReference type="GO" id="GO:0008277">
    <property type="term" value="P:regulation of G protein-coupled receptor signaling pathway"/>
    <property type="evidence" value="ECO:0000304"/>
    <property type="project" value="ProtInc"/>
</dbReference>
<dbReference type="GO" id="GO:0001975">
    <property type="term" value="P:response to amphetamine"/>
    <property type="evidence" value="ECO:0007669"/>
    <property type="project" value="Ensembl"/>
</dbReference>
<dbReference type="GO" id="GO:0042220">
    <property type="term" value="P:response to cocaine"/>
    <property type="evidence" value="ECO:0007669"/>
    <property type="project" value="Ensembl"/>
</dbReference>
<dbReference type="GO" id="GO:0045471">
    <property type="term" value="P:response to ethanol"/>
    <property type="evidence" value="ECO:0007669"/>
    <property type="project" value="Ensembl"/>
</dbReference>
<dbReference type="CDD" id="cd08714">
    <property type="entry name" value="RGS_RGS4"/>
    <property type="match status" value="1"/>
</dbReference>
<dbReference type="FunFam" id="1.10.167.10:FF:000001">
    <property type="entry name" value="Putative regulator of g-protein signaling 12"/>
    <property type="match status" value="1"/>
</dbReference>
<dbReference type="FunFam" id="1.10.196.10:FF:000001">
    <property type="entry name" value="Regulator of G-protein signaling 8"/>
    <property type="match status" value="1"/>
</dbReference>
<dbReference type="Gene3D" id="1.10.196.10">
    <property type="match status" value="1"/>
</dbReference>
<dbReference type="Gene3D" id="1.10.167.10">
    <property type="entry name" value="Regulator of G-protein Signalling 4, domain 2"/>
    <property type="match status" value="1"/>
</dbReference>
<dbReference type="InterPro" id="IPR016137">
    <property type="entry name" value="RGS"/>
</dbReference>
<dbReference type="InterPro" id="IPR034953">
    <property type="entry name" value="RGS_RGS4"/>
</dbReference>
<dbReference type="InterPro" id="IPR036305">
    <property type="entry name" value="RGS_sf"/>
</dbReference>
<dbReference type="InterPro" id="IPR024066">
    <property type="entry name" value="RGS_subdom1/3"/>
</dbReference>
<dbReference type="InterPro" id="IPR044926">
    <property type="entry name" value="RGS_subdomain_2"/>
</dbReference>
<dbReference type="PANTHER" id="PTHR10845">
    <property type="entry name" value="REGULATOR OF G PROTEIN SIGNALING"/>
    <property type="match status" value="1"/>
</dbReference>
<dbReference type="PANTHER" id="PTHR10845:SF184">
    <property type="entry name" value="REGULATOR OF G-PROTEIN SIGNALING 4"/>
    <property type="match status" value="1"/>
</dbReference>
<dbReference type="Pfam" id="PF00615">
    <property type="entry name" value="RGS"/>
    <property type="match status" value="1"/>
</dbReference>
<dbReference type="PRINTS" id="PR01301">
    <property type="entry name" value="RGSPROTEIN"/>
</dbReference>
<dbReference type="SMART" id="SM00315">
    <property type="entry name" value="RGS"/>
    <property type="match status" value="1"/>
</dbReference>
<dbReference type="SUPFAM" id="SSF48097">
    <property type="entry name" value="Regulator of G-protein signaling, RGS"/>
    <property type="match status" value="1"/>
</dbReference>
<dbReference type="PROSITE" id="PS50132">
    <property type="entry name" value="RGS"/>
    <property type="match status" value="1"/>
</dbReference>
<gene>
    <name type="primary">RGS4</name>
</gene>
<keyword id="KW-0025">Alternative splicing</keyword>
<keyword id="KW-0449">Lipoprotein</keyword>
<keyword id="KW-0564">Palmitate</keyword>
<keyword id="KW-0597">Phosphoprotein</keyword>
<keyword id="KW-1267">Proteomics identification</keyword>
<keyword id="KW-1185">Reference proteome</keyword>
<keyword id="KW-1211">Schizophrenia</keyword>
<keyword id="KW-0734">Signal transduction inhibitor</keyword>
<reference key="1">
    <citation type="journal article" date="1996" name="Nature">
        <title>Inhibition of G-protein-mediated MAP kinase activation by a new mammalian gene family.</title>
        <authorList>
            <person name="Druey K.M."/>
            <person name="Blumer K.J."/>
            <person name="Kang V.H."/>
            <person name="Kehrl J.H."/>
        </authorList>
    </citation>
    <scope>NUCLEOTIDE SEQUENCE [MRNA] (ISOFORM 1)</scope>
</reference>
<reference key="2">
    <citation type="journal article" date="2007" name="Gene">
        <title>Full length cloning and expression analysis of splice variants of regulator of G-protein signaling RGS4 in human and murine brain.</title>
        <authorList>
            <person name="Ding L."/>
            <person name="Mychaleckyj J.C."/>
            <person name="Hegde A.N."/>
        </authorList>
    </citation>
    <scope>NUCLEOTIDE SEQUENCE [MRNA] (ISOFORMS 1; 2; 3 AND 5)</scope>
    <scope>ALTERNATIVE SPLICING (ISOFORM 4)</scope>
    <scope>TISSUE SPECIFICITY</scope>
</reference>
<reference key="3">
    <citation type="submission" date="2002-03" db="EMBL/GenBank/DDBJ databases">
        <title>cDNA clones of human proteins involved in signal transduction sequenced by the Guthrie cDNA resource center (www.cdna.org).</title>
        <authorList>
            <person name="Puhl H.L. III"/>
            <person name="Ikeda S.R."/>
            <person name="Aronstam R.S."/>
        </authorList>
    </citation>
    <scope>NUCLEOTIDE SEQUENCE [LARGE SCALE MRNA] (ISOFORM 1)</scope>
    <source>
        <tissue>Brain</tissue>
        <tissue>Uterus</tissue>
    </source>
</reference>
<reference key="4">
    <citation type="submission" date="2003-05" db="EMBL/GenBank/DDBJ databases">
        <title>Cloning of human full-length CDSs in BD Creator(TM) system donor vector.</title>
        <authorList>
            <person name="Kalnine N."/>
            <person name="Chen X."/>
            <person name="Rolfs A."/>
            <person name="Halleck A."/>
            <person name="Hines L."/>
            <person name="Eisenstein S."/>
            <person name="Koundinya M."/>
            <person name="Raphael J."/>
            <person name="Moreira D."/>
            <person name="Kelley T."/>
            <person name="LaBaer J."/>
            <person name="Lin Y."/>
            <person name="Phelan M."/>
            <person name="Farmer A."/>
        </authorList>
    </citation>
    <scope>NUCLEOTIDE SEQUENCE [LARGE SCALE MRNA] (ISOFORM 1)</scope>
</reference>
<reference key="5">
    <citation type="journal article" date="2004" name="Nat. Genet.">
        <title>Complete sequencing and characterization of 21,243 full-length human cDNAs.</title>
        <authorList>
            <person name="Ota T."/>
            <person name="Suzuki Y."/>
            <person name="Nishikawa T."/>
            <person name="Otsuki T."/>
            <person name="Sugiyama T."/>
            <person name="Irie R."/>
            <person name="Wakamatsu A."/>
            <person name="Hayashi K."/>
            <person name="Sato H."/>
            <person name="Nagai K."/>
            <person name="Kimura K."/>
            <person name="Makita H."/>
            <person name="Sekine M."/>
            <person name="Obayashi M."/>
            <person name="Nishi T."/>
            <person name="Shibahara T."/>
            <person name="Tanaka T."/>
            <person name="Ishii S."/>
            <person name="Yamamoto J."/>
            <person name="Saito K."/>
            <person name="Kawai Y."/>
            <person name="Isono Y."/>
            <person name="Nakamura Y."/>
            <person name="Nagahari K."/>
            <person name="Murakami K."/>
            <person name="Yasuda T."/>
            <person name="Iwayanagi T."/>
            <person name="Wagatsuma M."/>
            <person name="Shiratori A."/>
            <person name="Sudo H."/>
            <person name="Hosoiri T."/>
            <person name="Kaku Y."/>
            <person name="Kodaira H."/>
            <person name="Kondo H."/>
            <person name="Sugawara M."/>
            <person name="Takahashi M."/>
            <person name="Kanda K."/>
            <person name="Yokoi T."/>
            <person name="Furuya T."/>
            <person name="Kikkawa E."/>
            <person name="Omura Y."/>
            <person name="Abe K."/>
            <person name="Kamihara K."/>
            <person name="Katsuta N."/>
            <person name="Sato K."/>
            <person name="Tanikawa M."/>
            <person name="Yamazaki M."/>
            <person name="Ninomiya K."/>
            <person name="Ishibashi T."/>
            <person name="Yamashita H."/>
            <person name="Murakawa K."/>
            <person name="Fujimori K."/>
            <person name="Tanai H."/>
            <person name="Kimata M."/>
            <person name="Watanabe M."/>
            <person name="Hiraoka S."/>
            <person name="Chiba Y."/>
            <person name="Ishida S."/>
            <person name="Ono Y."/>
            <person name="Takiguchi S."/>
            <person name="Watanabe S."/>
            <person name="Yosida M."/>
            <person name="Hotuta T."/>
            <person name="Kusano J."/>
            <person name="Kanehori K."/>
            <person name="Takahashi-Fujii A."/>
            <person name="Hara H."/>
            <person name="Tanase T.-O."/>
            <person name="Nomura Y."/>
            <person name="Togiya S."/>
            <person name="Komai F."/>
            <person name="Hara R."/>
            <person name="Takeuchi K."/>
            <person name="Arita M."/>
            <person name="Imose N."/>
            <person name="Musashino K."/>
            <person name="Yuuki H."/>
            <person name="Oshima A."/>
            <person name="Sasaki N."/>
            <person name="Aotsuka S."/>
            <person name="Yoshikawa Y."/>
            <person name="Matsunawa H."/>
            <person name="Ichihara T."/>
            <person name="Shiohata N."/>
            <person name="Sano S."/>
            <person name="Moriya S."/>
            <person name="Momiyama H."/>
            <person name="Satoh N."/>
            <person name="Takami S."/>
            <person name="Terashima Y."/>
            <person name="Suzuki O."/>
            <person name="Nakagawa S."/>
            <person name="Senoh A."/>
            <person name="Mizoguchi H."/>
            <person name="Goto Y."/>
            <person name="Shimizu F."/>
            <person name="Wakebe H."/>
            <person name="Hishigaki H."/>
            <person name="Watanabe T."/>
            <person name="Sugiyama A."/>
            <person name="Takemoto M."/>
            <person name="Kawakami B."/>
            <person name="Yamazaki M."/>
            <person name="Watanabe K."/>
            <person name="Kumagai A."/>
            <person name="Itakura S."/>
            <person name="Fukuzumi Y."/>
            <person name="Fujimori Y."/>
            <person name="Komiyama M."/>
            <person name="Tashiro H."/>
            <person name="Tanigami A."/>
            <person name="Fujiwara T."/>
            <person name="Ono T."/>
            <person name="Yamada K."/>
            <person name="Fujii Y."/>
            <person name="Ozaki K."/>
            <person name="Hirao M."/>
            <person name="Ohmori Y."/>
            <person name="Kawabata A."/>
            <person name="Hikiji T."/>
            <person name="Kobatake N."/>
            <person name="Inagaki H."/>
            <person name="Ikema Y."/>
            <person name="Okamoto S."/>
            <person name="Okitani R."/>
            <person name="Kawakami T."/>
            <person name="Noguchi S."/>
            <person name="Itoh T."/>
            <person name="Shigeta K."/>
            <person name="Senba T."/>
            <person name="Matsumura K."/>
            <person name="Nakajima Y."/>
            <person name="Mizuno T."/>
            <person name="Morinaga M."/>
            <person name="Sasaki M."/>
            <person name="Togashi T."/>
            <person name="Oyama M."/>
            <person name="Hata H."/>
            <person name="Watanabe M."/>
            <person name="Komatsu T."/>
            <person name="Mizushima-Sugano J."/>
            <person name="Satoh T."/>
            <person name="Shirai Y."/>
            <person name="Takahashi Y."/>
            <person name="Nakagawa K."/>
            <person name="Okumura K."/>
            <person name="Nagase T."/>
            <person name="Nomura N."/>
            <person name="Kikuchi H."/>
            <person name="Masuho Y."/>
            <person name="Yamashita R."/>
            <person name="Nakai K."/>
            <person name="Yada T."/>
            <person name="Nakamura Y."/>
            <person name="Ohara O."/>
            <person name="Isogai T."/>
            <person name="Sugano S."/>
        </authorList>
    </citation>
    <scope>NUCLEOTIDE SEQUENCE [LARGE SCALE MRNA] (ISOFORMS 1; 3 AND 5)</scope>
    <source>
        <tissue>Hippocampus</tissue>
        <tissue>Thalamus</tissue>
        <tissue>Trachea</tissue>
    </source>
</reference>
<reference key="6">
    <citation type="journal article" date="2006" name="Nature">
        <title>The DNA sequence and biological annotation of human chromosome 1.</title>
        <authorList>
            <person name="Gregory S.G."/>
            <person name="Barlow K.F."/>
            <person name="McLay K.E."/>
            <person name="Kaul R."/>
            <person name="Swarbreck D."/>
            <person name="Dunham A."/>
            <person name="Scott C.E."/>
            <person name="Howe K.L."/>
            <person name="Woodfine K."/>
            <person name="Spencer C.C.A."/>
            <person name="Jones M.C."/>
            <person name="Gillson C."/>
            <person name="Searle S."/>
            <person name="Zhou Y."/>
            <person name="Kokocinski F."/>
            <person name="McDonald L."/>
            <person name="Evans R."/>
            <person name="Phillips K."/>
            <person name="Atkinson A."/>
            <person name="Cooper R."/>
            <person name="Jones C."/>
            <person name="Hall R.E."/>
            <person name="Andrews T.D."/>
            <person name="Lloyd C."/>
            <person name="Ainscough R."/>
            <person name="Almeida J.P."/>
            <person name="Ambrose K.D."/>
            <person name="Anderson F."/>
            <person name="Andrew R.W."/>
            <person name="Ashwell R.I.S."/>
            <person name="Aubin K."/>
            <person name="Babbage A.K."/>
            <person name="Bagguley C.L."/>
            <person name="Bailey J."/>
            <person name="Beasley H."/>
            <person name="Bethel G."/>
            <person name="Bird C.P."/>
            <person name="Bray-Allen S."/>
            <person name="Brown J.Y."/>
            <person name="Brown A.J."/>
            <person name="Buckley D."/>
            <person name="Burton J."/>
            <person name="Bye J."/>
            <person name="Carder C."/>
            <person name="Chapman J.C."/>
            <person name="Clark S.Y."/>
            <person name="Clarke G."/>
            <person name="Clee C."/>
            <person name="Cobley V."/>
            <person name="Collier R.E."/>
            <person name="Corby N."/>
            <person name="Coville G.J."/>
            <person name="Davies J."/>
            <person name="Deadman R."/>
            <person name="Dunn M."/>
            <person name="Earthrowl M."/>
            <person name="Ellington A.G."/>
            <person name="Errington H."/>
            <person name="Frankish A."/>
            <person name="Frankland J."/>
            <person name="French L."/>
            <person name="Garner P."/>
            <person name="Garnett J."/>
            <person name="Gay L."/>
            <person name="Ghori M.R.J."/>
            <person name="Gibson R."/>
            <person name="Gilby L.M."/>
            <person name="Gillett W."/>
            <person name="Glithero R.J."/>
            <person name="Grafham D.V."/>
            <person name="Griffiths C."/>
            <person name="Griffiths-Jones S."/>
            <person name="Grocock R."/>
            <person name="Hammond S."/>
            <person name="Harrison E.S.I."/>
            <person name="Hart E."/>
            <person name="Haugen E."/>
            <person name="Heath P.D."/>
            <person name="Holmes S."/>
            <person name="Holt K."/>
            <person name="Howden P.J."/>
            <person name="Hunt A.R."/>
            <person name="Hunt S.E."/>
            <person name="Hunter G."/>
            <person name="Isherwood J."/>
            <person name="James R."/>
            <person name="Johnson C."/>
            <person name="Johnson D."/>
            <person name="Joy A."/>
            <person name="Kay M."/>
            <person name="Kershaw J.K."/>
            <person name="Kibukawa M."/>
            <person name="Kimberley A.M."/>
            <person name="King A."/>
            <person name="Knights A.J."/>
            <person name="Lad H."/>
            <person name="Laird G."/>
            <person name="Lawlor S."/>
            <person name="Leongamornlert D.A."/>
            <person name="Lloyd D.M."/>
            <person name="Loveland J."/>
            <person name="Lovell J."/>
            <person name="Lush M.J."/>
            <person name="Lyne R."/>
            <person name="Martin S."/>
            <person name="Mashreghi-Mohammadi M."/>
            <person name="Matthews L."/>
            <person name="Matthews N.S.W."/>
            <person name="McLaren S."/>
            <person name="Milne S."/>
            <person name="Mistry S."/>
            <person name="Moore M.J.F."/>
            <person name="Nickerson T."/>
            <person name="O'Dell C.N."/>
            <person name="Oliver K."/>
            <person name="Palmeiri A."/>
            <person name="Palmer S.A."/>
            <person name="Parker A."/>
            <person name="Patel D."/>
            <person name="Pearce A.V."/>
            <person name="Peck A.I."/>
            <person name="Pelan S."/>
            <person name="Phelps K."/>
            <person name="Phillimore B.J."/>
            <person name="Plumb R."/>
            <person name="Rajan J."/>
            <person name="Raymond C."/>
            <person name="Rouse G."/>
            <person name="Saenphimmachak C."/>
            <person name="Sehra H.K."/>
            <person name="Sheridan E."/>
            <person name="Shownkeen R."/>
            <person name="Sims S."/>
            <person name="Skuce C.D."/>
            <person name="Smith M."/>
            <person name="Steward C."/>
            <person name="Subramanian S."/>
            <person name="Sycamore N."/>
            <person name="Tracey A."/>
            <person name="Tromans A."/>
            <person name="Van Helmond Z."/>
            <person name="Wall M."/>
            <person name="Wallis J.M."/>
            <person name="White S."/>
            <person name="Whitehead S.L."/>
            <person name="Wilkinson J.E."/>
            <person name="Willey D.L."/>
            <person name="Williams H."/>
            <person name="Wilming L."/>
            <person name="Wray P.W."/>
            <person name="Wu Z."/>
            <person name="Coulson A."/>
            <person name="Vaudin M."/>
            <person name="Sulston J.E."/>
            <person name="Durbin R.M."/>
            <person name="Hubbard T."/>
            <person name="Wooster R."/>
            <person name="Dunham I."/>
            <person name="Carter N.P."/>
            <person name="McVean G."/>
            <person name="Ross M.T."/>
            <person name="Harrow J."/>
            <person name="Olson M.V."/>
            <person name="Beck S."/>
            <person name="Rogers J."/>
            <person name="Bentley D.R."/>
        </authorList>
    </citation>
    <scope>NUCLEOTIDE SEQUENCE [LARGE SCALE GENOMIC DNA]</scope>
</reference>
<reference key="7">
    <citation type="submission" date="2005-07" db="EMBL/GenBank/DDBJ databases">
        <authorList>
            <person name="Mural R.J."/>
            <person name="Istrail S."/>
            <person name="Sutton G.G."/>
            <person name="Florea L."/>
            <person name="Halpern A.L."/>
            <person name="Mobarry C.M."/>
            <person name="Lippert R."/>
            <person name="Walenz B."/>
            <person name="Shatkay H."/>
            <person name="Dew I."/>
            <person name="Miller J.R."/>
            <person name="Flanigan M.J."/>
            <person name="Edwards N.J."/>
            <person name="Bolanos R."/>
            <person name="Fasulo D."/>
            <person name="Halldorsson B.V."/>
            <person name="Hannenhalli S."/>
            <person name="Turner R."/>
            <person name="Yooseph S."/>
            <person name="Lu F."/>
            <person name="Nusskern D.R."/>
            <person name="Shue B.C."/>
            <person name="Zheng X.H."/>
            <person name="Zhong F."/>
            <person name="Delcher A.L."/>
            <person name="Huson D.H."/>
            <person name="Kravitz S.A."/>
            <person name="Mouchard L."/>
            <person name="Reinert K."/>
            <person name="Remington K.A."/>
            <person name="Clark A.G."/>
            <person name="Waterman M.S."/>
            <person name="Eichler E.E."/>
            <person name="Adams M.D."/>
            <person name="Hunkapiller M.W."/>
            <person name="Myers E.W."/>
            <person name="Venter J.C."/>
        </authorList>
    </citation>
    <scope>NUCLEOTIDE SEQUENCE [LARGE SCALE GENOMIC DNA]</scope>
</reference>
<reference key="8">
    <citation type="journal article" date="2004" name="Genome Res.">
        <title>The status, quality, and expansion of the NIH full-length cDNA project: the Mammalian Gene Collection (MGC).</title>
        <authorList>
            <consortium name="The MGC Project Team"/>
        </authorList>
    </citation>
    <scope>NUCLEOTIDE SEQUENCE [LARGE SCALE MRNA] (ISOFORM 1)</scope>
    <source>
        <tissue>Brain</tissue>
    </source>
</reference>
<reference key="9">
    <citation type="journal article" date="1999" name="J. Biol. Chem.">
        <title>Palmitoylation of a conserved cysteine in the regulator of G protein signaling (RGS) domain modulates the GTPase-activating activity of RGS4 and RGS10.</title>
        <authorList>
            <person name="Tu Y."/>
            <person name="Popov S."/>
            <person name="Slaughter C."/>
            <person name="Ross E.M."/>
        </authorList>
    </citation>
    <scope>PALMITOYLATION AT CYS-2; CYS-12 AND CYS-95</scope>
</reference>
<reference key="10">
    <citation type="journal article" date="1998" name="J. Biol. Chem.">
        <title>RGSZ1, a Gz-selective RGS protein in brain. Structure, membrane association, regulation by Galphaz phosphorylation, and relationship to a Gz GTPase-activating protein subfamily.</title>
        <authorList>
            <person name="Wang J."/>
            <person name="Ducret A."/>
            <person name="Tu Y."/>
            <person name="Kozasa T."/>
            <person name="Aebersold R."/>
            <person name="Ross E.M."/>
        </authorList>
    </citation>
    <scope>INHIBITION</scope>
</reference>
<reference key="11">
    <citation type="journal article" date="2002" name="Hum. Mol. Genet.">
        <title>Association and linkage analyses of RGS4 polymorphisms in schizophrenia.</title>
        <authorList>
            <person name="Chowdari K.V."/>
            <person name="Mirnics K."/>
            <person name="Semwal P."/>
            <person name="Wood J."/>
            <person name="Lawrence E."/>
            <person name="Bhatia T."/>
            <person name="Deshpande S.N."/>
            <person name="Thelma B.K."/>
            <person name="Ferrell R.E."/>
            <person name="Middleton F.A."/>
            <person name="Devlin B."/>
            <person name="Levitt P."/>
            <person name="Lewis D.A."/>
            <person name="Nimgaonkar V.L."/>
        </authorList>
    </citation>
    <scope>POSSIBLE INVOLVEMENT IN SCZD</scope>
</reference>
<reference key="12">
    <citation type="journal article" date="2004" name="Am. J. Med. Genet. B Neuropsychiatr. Genet.">
        <title>Confirming RGS4 as a susceptibility gene for schizophrenia.</title>
        <authorList>
            <person name="Morris D.W."/>
            <person name="Rodgers A."/>
            <person name="McGhee K.A."/>
            <person name="Schwaiger S."/>
            <person name="Scully P."/>
            <person name="Quinn J."/>
            <person name="Meagher D."/>
            <person name="Waddington J.L."/>
            <person name="Gill M."/>
            <person name="Corvin A.P."/>
        </authorList>
    </citation>
    <scope>POSSIBLE INVOLVEMENT IN SCZD</scope>
</reference>
<evidence type="ECO:0000250" key="1"/>
<evidence type="ECO:0000255" key="2">
    <source>
        <dbReference type="PROSITE-ProRule" id="PRU00171"/>
    </source>
</evidence>
<evidence type="ECO:0000269" key="3">
    <source>
    </source>
</evidence>
<evidence type="ECO:0000269" key="4">
    <source>
    </source>
</evidence>
<evidence type="ECO:0000269" key="5">
    <source>
    </source>
</evidence>
<evidence type="ECO:0000269" key="6">
    <source>
    </source>
</evidence>
<evidence type="ECO:0000303" key="7">
    <source>
    </source>
</evidence>
<evidence type="ECO:0000303" key="8">
    <source>
    </source>
</evidence>
<evidence type="ECO:0000305" key="9"/>
<evidence type="ECO:0000305" key="10">
    <source>
    </source>
</evidence>
<sequence>MCKGLAGLPASCLRSAKDMKHRLGFLLQKSDSCEHNSSHNKKDKVVICQRVSQEEVKKWAESLENLISHECGLAAFKAFLKSEYSEENIDFWISCEEYKKIKSPSKLSPKAKKIYNEFISVQATKEVNLDSCTREETSRNMLEPTITCFDEAQKKIFNLMEKDSYRRFLKSRFYLDLVNPSSCGAEKQKGAKSSADCASLVPQCA</sequence>
<accession>P49798</accession>
<accession>A7XA56</accession>
<accession>A7XA58</accession>
<accession>A7XA59</accession>
<accession>A7YVV7</accession>
<accession>B1APZ3</accession>
<proteinExistence type="evidence at protein level"/>
<organism>
    <name type="scientific">Homo sapiens</name>
    <name type="common">Human</name>
    <dbReference type="NCBI Taxonomy" id="9606"/>
    <lineage>
        <taxon>Eukaryota</taxon>
        <taxon>Metazoa</taxon>
        <taxon>Chordata</taxon>
        <taxon>Craniata</taxon>
        <taxon>Vertebrata</taxon>
        <taxon>Euteleostomi</taxon>
        <taxon>Mammalia</taxon>
        <taxon>Eutheria</taxon>
        <taxon>Euarchontoglires</taxon>
        <taxon>Primates</taxon>
        <taxon>Haplorrhini</taxon>
        <taxon>Catarrhini</taxon>
        <taxon>Hominidae</taxon>
        <taxon>Homo</taxon>
    </lineage>
</organism>